<organism>
    <name type="scientific">Murine polyomavirus (strain Crawford small-plaque)</name>
    <name type="common">MPyV</name>
    <dbReference type="NCBI Taxonomy" id="10637"/>
    <lineage>
        <taxon>Viruses</taxon>
        <taxon>Monodnaviria</taxon>
        <taxon>Shotokuvirae</taxon>
        <taxon>Cossaviricota</taxon>
        <taxon>Papovaviricetes</taxon>
        <taxon>Sepolyvirales</taxon>
        <taxon>Polyomaviridae</taxon>
        <taxon>Alphapolyomavirus</taxon>
        <taxon>Mus musculus polyomavirus 1</taxon>
    </lineage>
</organism>
<keyword id="KW-0002">3D-structure</keyword>
<keyword id="KW-0024">Alternative initiation</keyword>
<keyword id="KW-0025">Alternative splicing</keyword>
<keyword id="KW-0167">Capsid protein</keyword>
<keyword id="KW-0238">DNA-binding</keyword>
<keyword id="KW-1038">Host endoplasmic reticulum</keyword>
<keyword id="KW-1043">Host membrane</keyword>
<keyword id="KW-1048">Host nucleus</keyword>
<keyword id="KW-0426">Late protein</keyword>
<keyword id="KW-0449">Lipoprotein</keyword>
<keyword id="KW-0472">Membrane</keyword>
<keyword id="KW-0519">Myristate</keyword>
<keyword id="KW-0812">Transmembrane</keyword>
<keyword id="KW-1133">Transmembrane helix</keyword>
<keyword id="KW-1163">Viral penetration into host nucleus</keyword>
<keyword id="KW-0946">Virion</keyword>
<keyword id="KW-1160">Virus entry into host cell</keyword>
<sequence>MGAALTILVDLIEGLAEVSTLTGLSAEAILSGEALAALDGEITALTLEGVMSSETALATMGISEEVYGFVSTVPVFVNRTAGAIWLMQTVQGASTISLGIQRYLHNEEVPTVNRNMALIPWRDPALLDIYFPGVNQFAHALNVVHDWGHGLLHSVGRYVWQMVVQETQHRLEGAVRELTVRQTHTFLDGLARLLENTRWVVSNAPQSAIDAINRGASSASSGYSSLSDYYRQLGLNPPQRRALFNRIEGSMGNGGPTPAAHIQDESGEVIKFYQAQVVSHQRVTPDWMLPLILGLYGDITPTWATVIEEDGPQKKKRRL</sequence>
<reference key="1">
    <citation type="journal article" date="1983" name="J. Virol.">
        <title>Comparison of the DNA sequence of the Crawford small-plaque variant of polyomavirus with those of polyomaviruses A2 and strain 3.</title>
        <authorList>
            <person name="Rothwell V.M."/>
            <person name="Folk W.R."/>
        </authorList>
    </citation>
    <scope>NUCLEOTIDE SEQUENCE [GENOMIC DNA]</scope>
</reference>
<reference key="2">
    <citation type="journal article" date="2009" name="Virology">
        <title>The Polyomaviridae: Contributions of virus structure to our understanding of virus receptors and infectious entry.</title>
        <authorList>
            <person name="Neu U."/>
            <person name="Stehle T."/>
            <person name="Atwood W.J."/>
        </authorList>
    </citation>
    <scope>REVIEW</scope>
</reference>
<reference key="3">
    <citation type="journal article" date="2002" name="Protein Sci.">
        <title>Composites of local structure propensities: evidence for local encoding of long-range structure.</title>
        <authorList>
            <person name="Shortle D."/>
        </authorList>
    </citation>
    <scope>X-RAY CRYSTALLOGRAPHY (2.2 ANGSTROMS) OF 279-297</scope>
</reference>
<comment type="function">
    <molecule>Isoform VP2</molecule>
    <text evidence="1">Structural protein that resides within the core of the capsid surrounded by 72 VP1 pentamers. Participates in host cell receptor binding together with VP1. Following virus endocytosis and trafficking to the endoplasmic reticulum, VP2 and VP3 form oligomers and integrate into the endoplasmic reticulum membrane. Heterooligomer VP2-VP3 may create a viroporin for transporting the viral genome across the endoplasmic reticulum membrane to the cytoplasm. Nuclear entry of the viral DNA involves the selective exposure and importin recognition of VP2 or VP3 nuclear localization signal (shared C-terminus). Plays a role in virion assembly within the nucleus in particular through a DNA-binding domain located in the C-terminal region. A N-terminal myristoylation suggests a scaffold function for virion assembly (By similarity).</text>
</comment>
<comment type="function">
    <molecule>Isoform VP3</molecule>
    <text evidence="1">Structural protein that resides within the core of the capsid surrounded by 72 VP1 pentamers. Following virus endocytosis and trafficking to the endoplasmic reticulum, VP2 and VP3 form oligomers and integrate into the endoplasmic reticulum membrane. Heterooligomer VP2-VP3 may create a viroporin for transporting the viral genome across the endoplasmic reticulum membrane to the cytoplasm. Nuclear entry of the viral DNA involves the selective exposure and importin recognition of VP2 or VP3 nuclear localization signal (shared C-terminus). Plays a role in virion assembly within the nucleus (By similarity).</text>
</comment>
<comment type="subunit">
    <text evidence="1">Isoform VP2 forms homooligomers, and heterooligomers with VP3 in the endoplasmic reticulum membrane. Interacts (via D1 domain) with VP1.</text>
</comment>
<comment type="subunit">
    <molecule>Isoform VP3</molecule>
    <text>Interacts (via D1 domain) with VP1.</text>
</comment>
<comment type="subcellular location">
    <molecule>Isoform VP2</molecule>
    <subcellularLocation>
        <location>Virion</location>
    </subcellularLocation>
    <subcellularLocation>
        <location>Host nucleus</location>
    </subcellularLocation>
    <subcellularLocation>
        <location>Host endoplasmic reticulum</location>
    </subcellularLocation>
    <subcellularLocation>
        <location evidence="1">Host endoplasmic reticulum membrane</location>
    </subcellularLocation>
</comment>
<comment type="subcellular location">
    <molecule>Isoform VP3</molecule>
    <subcellularLocation>
        <location>Virion</location>
    </subcellularLocation>
    <subcellularLocation>
        <location>Host nucleus</location>
    </subcellularLocation>
    <subcellularLocation>
        <location>Host endoplasmic reticulum</location>
    </subcellularLocation>
    <subcellularLocation>
        <location evidence="1">Host endoplasmic reticulum membrane</location>
    </subcellularLocation>
</comment>
<comment type="alternative products">
    <event type="alternative splicing"/>
    <event type="alternative initiation"/>
    <isoform>
        <id>P12908-1</id>
        <name>VP2</name>
        <name>Minor capsid protein VP2</name>
        <sequence type="displayed"/>
    </isoform>
    <isoform>
        <id>P12908-2</id>
        <name>VP3</name>
        <name>Minor capsid protein VP3</name>
        <sequence type="described" ref="VSP_018923"/>
    </isoform>
    <isoform>
        <id>P12907-1</id>
        <name>VP1</name>
        <sequence type="external"/>
    </isoform>
</comment>
<comment type="miscellaneous">
    <molecule>Isoform VP2</molecule>
    <text>Produced by alternative splicing of the late mRNA.</text>
</comment>
<comment type="miscellaneous">
    <molecule>Isoform VP3</molecule>
    <text evidence="3">Produced by alternative initiation at Met-116 of isoform VP2.</text>
</comment>
<comment type="similarity">
    <text evidence="3">Belongs to the polyomaviruses capsid protein VP2 family.</text>
</comment>
<dbReference type="EMBL" id="K02737">
    <property type="status" value="NOT_ANNOTATED_CDS"/>
    <property type="molecule type" value="Genomic_DNA"/>
</dbReference>
<dbReference type="PIR" id="E28838">
    <property type="entry name" value="VVVPC2"/>
</dbReference>
<dbReference type="PDB" id="1CN3">
    <property type="method" value="X-ray"/>
    <property type="resolution" value="2.20 A"/>
    <property type="chains" value="F=279-297"/>
</dbReference>
<dbReference type="PDBsum" id="1CN3"/>
<dbReference type="SMR" id="P12908"/>
<dbReference type="IntAct" id="P12908">
    <property type="interactions" value="1"/>
</dbReference>
<dbReference type="MINT" id="P12908"/>
<dbReference type="TCDB" id="1.A.83.1.5">
    <property type="family name" value="the sv40 virus viroporin vp2 (sv40 vp2) family"/>
</dbReference>
<dbReference type="EvolutionaryTrace" id="P12908"/>
<dbReference type="Proteomes" id="UP000008480">
    <property type="component" value="Segment"/>
</dbReference>
<dbReference type="GO" id="GO:0043657">
    <property type="term" value="C:host cell"/>
    <property type="evidence" value="ECO:0007669"/>
    <property type="project" value="GOC"/>
</dbReference>
<dbReference type="GO" id="GO:0044167">
    <property type="term" value="C:host cell endoplasmic reticulum membrane"/>
    <property type="evidence" value="ECO:0007669"/>
    <property type="project" value="UniProtKB-SubCell"/>
</dbReference>
<dbReference type="GO" id="GO:0042025">
    <property type="term" value="C:host cell nucleus"/>
    <property type="evidence" value="ECO:0007669"/>
    <property type="project" value="UniProtKB-SubCell"/>
</dbReference>
<dbReference type="GO" id="GO:0016020">
    <property type="term" value="C:membrane"/>
    <property type="evidence" value="ECO:0007669"/>
    <property type="project" value="UniProtKB-KW"/>
</dbReference>
<dbReference type="GO" id="GO:0019028">
    <property type="term" value="C:viral capsid"/>
    <property type="evidence" value="ECO:0007669"/>
    <property type="project" value="UniProtKB-KW"/>
</dbReference>
<dbReference type="GO" id="GO:0003677">
    <property type="term" value="F:DNA binding"/>
    <property type="evidence" value="ECO:0007669"/>
    <property type="project" value="UniProtKB-KW"/>
</dbReference>
<dbReference type="GO" id="GO:0005198">
    <property type="term" value="F:structural molecule activity"/>
    <property type="evidence" value="ECO:0007669"/>
    <property type="project" value="InterPro"/>
</dbReference>
<dbReference type="GO" id="GO:0046718">
    <property type="term" value="P:symbiont entry into host cell"/>
    <property type="evidence" value="ECO:0007669"/>
    <property type="project" value="UniProtKB-KW"/>
</dbReference>
<dbReference type="GO" id="GO:0075732">
    <property type="term" value="P:viral penetration into host nucleus"/>
    <property type="evidence" value="ECO:0007669"/>
    <property type="project" value="UniProtKB-KW"/>
</dbReference>
<dbReference type="InterPro" id="IPR001070">
    <property type="entry name" value="Polyoma_coat_VP2"/>
</dbReference>
<dbReference type="Pfam" id="PF00761">
    <property type="entry name" value="Polyoma_coat2"/>
    <property type="match status" value="1"/>
</dbReference>
<dbReference type="PIRSF" id="PIRSF003377">
    <property type="entry name" value="Polyoma_coat2"/>
    <property type="match status" value="1"/>
</dbReference>
<feature type="initiator methionine" description="Removed; by host" evidence="1">
    <location>
        <position position="1"/>
    </location>
</feature>
<feature type="chain" id="PRO_0000039219" description="Minor capsid protein VP2">
    <location>
        <begin position="2"/>
        <end position="319"/>
    </location>
</feature>
<feature type="transmembrane region" description="Helical" evidence="2">
    <location>
        <begin position="287"/>
        <end position="307"/>
    </location>
</feature>
<feature type="region of interest" description="D1" evidence="1">
    <location>
        <begin position="266"/>
        <end position="301"/>
    </location>
</feature>
<feature type="region of interest" description="DNA-binding" evidence="1">
    <location>
        <begin position="306"/>
        <end position="319"/>
    </location>
</feature>
<feature type="short sequence motif" description="Nuclear localization signal" evidence="1">
    <location>
        <begin position="311"/>
        <end position="319"/>
    </location>
</feature>
<feature type="lipid moiety-binding region" description="N-myristoyl glycine; by host" evidence="1">
    <location>
        <position position="2"/>
    </location>
</feature>
<feature type="splice variant" id="VSP_018923" description="In isoform VP3." evidence="3">
    <location>
        <begin position="1"/>
        <end position="115"/>
    </location>
</feature>
<feature type="helix" evidence="4">
    <location>
        <begin position="286"/>
        <end position="288"/>
    </location>
</feature>
<feature type="helix" evidence="4">
    <location>
        <begin position="289"/>
        <end position="294"/>
    </location>
</feature>
<proteinExistence type="evidence at protein level"/>
<accession>P12908</accession>
<evidence type="ECO:0000250" key="1"/>
<evidence type="ECO:0000255" key="2"/>
<evidence type="ECO:0000305" key="3"/>
<evidence type="ECO:0007829" key="4">
    <source>
        <dbReference type="PDB" id="1CN3"/>
    </source>
</evidence>
<name>VP2_POVMC</name>
<protein>
    <recommendedName>
        <fullName>Minor capsid protein VP2</fullName>
    </recommendedName>
    <alternativeName>
        <fullName>Minor structural protein VP2</fullName>
    </alternativeName>
</protein>
<organismHost>
    <name type="scientific">Mus musculus</name>
    <name type="common">Mouse</name>
    <dbReference type="NCBI Taxonomy" id="10090"/>
</organismHost>